<accession>A7FDF3</accession>
<feature type="chain" id="PRO_1000067409" description="Xaa-Pro dipeptidase">
    <location>
        <begin position="1"/>
        <end position="443"/>
    </location>
</feature>
<feature type="binding site" evidence="1">
    <location>
        <position position="246"/>
    </location>
    <ligand>
        <name>Mn(2+)</name>
        <dbReference type="ChEBI" id="CHEBI:29035"/>
        <label>2</label>
    </ligand>
</feature>
<feature type="binding site" evidence="1">
    <location>
        <position position="257"/>
    </location>
    <ligand>
        <name>Mn(2+)</name>
        <dbReference type="ChEBI" id="CHEBI:29035"/>
        <label>1</label>
    </ligand>
</feature>
<feature type="binding site" evidence="1">
    <location>
        <position position="257"/>
    </location>
    <ligand>
        <name>Mn(2+)</name>
        <dbReference type="ChEBI" id="CHEBI:29035"/>
        <label>2</label>
    </ligand>
</feature>
<feature type="binding site" evidence="1">
    <location>
        <position position="339"/>
    </location>
    <ligand>
        <name>Mn(2+)</name>
        <dbReference type="ChEBI" id="CHEBI:29035"/>
        <label>1</label>
    </ligand>
</feature>
<feature type="binding site" evidence="1">
    <location>
        <position position="384"/>
    </location>
    <ligand>
        <name>Mn(2+)</name>
        <dbReference type="ChEBI" id="CHEBI:29035"/>
        <label>1</label>
    </ligand>
</feature>
<feature type="binding site" evidence="1">
    <location>
        <position position="423"/>
    </location>
    <ligand>
        <name>Mn(2+)</name>
        <dbReference type="ChEBI" id="CHEBI:29035"/>
        <label>1</label>
    </ligand>
</feature>
<feature type="binding site" evidence="1">
    <location>
        <position position="423"/>
    </location>
    <ligand>
        <name>Mn(2+)</name>
        <dbReference type="ChEBI" id="CHEBI:29035"/>
        <label>2</label>
    </ligand>
</feature>
<name>PEPQ_YERP3</name>
<sequence>METLASLYNEHLSTLQQRTRDVLERHQLDALLIHSGELQRLFLDDRDYPFKVNPQFKAWVPVTEVPNCWLWVDGVNTPKLWFYSPVDYWHSVEPLPDSFWTKNIDVQPLLNADDIAQQLPVQRERVAYIGYAQQRAQALGFSAENINPQPVLDYLHYYRSYKTDYELACMREAQKTAVVGHRAAYEAFQSGMSEFDINLAYLMATGHRDTDVPYDNIVALNEHSAVLHYTILQHQPPAEIRSFLIDAGAEYNGYAADLTRTYAADRDSDFAALISDLNTEQLALIDTIKSGERYTDYHVQMHQRIAKLLRTHNLVTGISEEAMVEQGITCPFLPHGLGHPLGLQVHDTAGFMQDDKGTNLNAPSKYPYLRCTRVLQPRMVLTIEPGLYFIDSLLAPWRIGEFSKHFNWDRIDALKPYGGIRIEDNIVIHDKRVENMTRDLKLA</sequence>
<protein>
    <recommendedName>
        <fullName evidence="1">Xaa-Pro dipeptidase</fullName>
        <shortName evidence="1">X-Pro dipeptidase</shortName>
        <ecNumber evidence="1">3.4.13.9</ecNumber>
    </recommendedName>
    <alternativeName>
        <fullName evidence="1">Imidodipeptidase</fullName>
    </alternativeName>
    <alternativeName>
        <fullName evidence="1">Proline dipeptidase</fullName>
        <shortName evidence="1">Prolidase</shortName>
    </alternativeName>
</protein>
<reference key="1">
    <citation type="journal article" date="2007" name="PLoS Genet.">
        <title>The complete genome sequence of Yersinia pseudotuberculosis IP31758, the causative agent of Far East scarlet-like fever.</title>
        <authorList>
            <person name="Eppinger M."/>
            <person name="Rosovitz M.J."/>
            <person name="Fricke W.F."/>
            <person name="Rasko D.A."/>
            <person name="Kokorina G."/>
            <person name="Fayolle C."/>
            <person name="Lindler L.E."/>
            <person name="Carniel E."/>
            <person name="Ravel J."/>
        </authorList>
    </citation>
    <scope>NUCLEOTIDE SEQUENCE [LARGE SCALE GENOMIC DNA]</scope>
    <source>
        <strain>IP 31758</strain>
    </source>
</reference>
<comment type="function">
    <text evidence="1">Splits dipeptides with a prolyl residue in the C-terminal position.</text>
</comment>
<comment type="catalytic activity">
    <reaction evidence="1">
        <text>Xaa-L-Pro dipeptide + H2O = an L-alpha-amino acid + L-proline</text>
        <dbReference type="Rhea" id="RHEA:76407"/>
        <dbReference type="ChEBI" id="CHEBI:15377"/>
        <dbReference type="ChEBI" id="CHEBI:59869"/>
        <dbReference type="ChEBI" id="CHEBI:60039"/>
        <dbReference type="ChEBI" id="CHEBI:195196"/>
        <dbReference type="EC" id="3.4.13.9"/>
    </reaction>
</comment>
<comment type="cofactor">
    <cofactor evidence="1">
        <name>Mn(2+)</name>
        <dbReference type="ChEBI" id="CHEBI:29035"/>
    </cofactor>
    <text evidence="1">Binds 2 manganese ions per subunit.</text>
</comment>
<comment type="similarity">
    <text evidence="1">Belongs to the peptidase M24B family. Bacterial-type prolidase subfamily.</text>
</comment>
<keyword id="KW-0224">Dipeptidase</keyword>
<keyword id="KW-0378">Hydrolase</keyword>
<keyword id="KW-0464">Manganese</keyword>
<keyword id="KW-0479">Metal-binding</keyword>
<keyword id="KW-0482">Metalloprotease</keyword>
<keyword id="KW-0645">Protease</keyword>
<gene>
    <name evidence="1" type="primary">pepQ</name>
    <name type="ordered locus">YpsIP31758_0284</name>
</gene>
<organism>
    <name type="scientific">Yersinia pseudotuberculosis serotype O:1b (strain IP 31758)</name>
    <dbReference type="NCBI Taxonomy" id="349747"/>
    <lineage>
        <taxon>Bacteria</taxon>
        <taxon>Pseudomonadati</taxon>
        <taxon>Pseudomonadota</taxon>
        <taxon>Gammaproteobacteria</taxon>
        <taxon>Enterobacterales</taxon>
        <taxon>Yersiniaceae</taxon>
        <taxon>Yersinia</taxon>
    </lineage>
</organism>
<dbReference type="EC" id="3.4.13.9" evidence="1"/>
<dbReference type="EMBL" id="CP000720">
    <property type="protein sequence ID" value="ABS49349.1"/>
    <property type="molecule type" value="Genomic_DNA"/>
</dbReference>
<dbReference type="RefSeq" id="WP_011191548.1">
    <property type="nucleotide sequence ID" value="NC_009708.1"/>
</dbReference>
<dbReference type="SMR" id="A7FDF3"/>
<dbReference type="MEROPS" id="M24.003"/>
<dbReference type="KEGG" id="ypi:YpsIP31758_0284"/>
<dbReference type="HOGENOM" id="CLU_050675_0_0_6"/>
<dbReference type="Proteomes" id="UP000002412">
    <property type="component" value="Chromosome"/>
</dbReference>
<dbReference type="GO" id="GO:0005829">
    <property type="term" value="C:cytosol"/>
    <property type="evidence" value="ECO:0007669"/>
    <property type="project" value="TreeGrafter"/>
</dbReference>
<dbReference type="GO" id="GO:0004177">
    <property type="term" value="F:aminopeptidase activity"/>
    <property type="evidence" value="ECO:0007669"/>
    <property type="project" value="TreeGrafter"/>
</dbReference>
<dbReference type="GO" id="GO:0046872">
    <property type="term" value="F:metal ion binding"/>
    <property type="evidence" value="ECO:0007669"/>
    <property type="project" value="UniProtKB-KW"/>
</dbReference>
<dbReference type="GO" id="GO:0008235">
    <property type="term" value="F:metalloexopeptidase activity"/>
    <property type="evidence" value="ECO:0007669"/>
    <property type="project" value="UniProtKB-UniRule"/>
</dbReference>
<dbReference type="GO" id="GO:0016795">
    <property type="term" value="F:phosphoric triester hydrolase activity"/>
    <property type="evidence" value="ECO:0007669"/>
    <property type="project" value="InterPro"/>
</dbReference>
<dbReference type="GO" id="GO:0102009">
    <property type="term" value="F:proline dipeptidase activity"/>
    <property type="evidence" value="ECO:0007669"/>
    <property type="project" value="UniProtKB-EC"/>
</dbReference>
<dbReference type="GO" id="GO:0006508">
    <property type="term" value="P:proteolysis"/>
    <property type="evidence" value="ECO:0007669"/>
    <property type="project" value="UniProtKB-KW"/>
</dbReference>
<dbReference type="Gene3D" id="3.90.230.10">
    <property type="entry name" value="Creatinase/methionine aminopeptidase superfamily"/>
    <property type="match status" value="1"/>
</dbReference>
<dbReference type="Gene3D" id="3.40.350.10">
    <property type="entry name" value="Creatinase/prolidase N-terminal domain"/>
    <property type="match status" value="1"/>
</dbReference>
<dbReference type="HAMAP" id="MF_01279">
    <property type="entry name" value="X_Pro_dipeptid"/>
    <property type="match status" value="1"/>
</dbReference>
<dbReference type="InterPro" id="IPR029149">
    <property type="entry name" value="Creatin/AminoP/Spt16_N"/>
</dbReference>
<dbReference type="InterPro" id="IPR036005">
    <property type="entry name" value="Creatinase/aminopeptidase-like"/>
</dbReference>
<dbReference type="InterPro" id="IPR048819">
    <property type="entry name" value="PepQ_N"/>
</dbReference>
<dbReference type="InterPro" id="IPR000994">
    <property type="entry name" value="Pept_M24"/>
</dbReference>
<dbReference type="InterPro" id="IPR001131">
    <property type="entry name" value="Peptidase_M24B_aminopep-P_CS"/>
</dbReference>
<dbReference type="InterPro" id="IPR052433">
    <property type="entry name" value="X-Pro_dipept-like"/>
</dbReference>
<dbReference type="InterPro" id="IPR022846">
    <property type="entry name" value="X_Pro_dipept"/>
</dbReference>
<dbReference type="NCBIfam" id="NF010133">
    <property type="entry name" value="PRK13607.1"/>
    <property type="match status" value="1"/>
</dbReference>
<dbReference type="PANTHER" id="PTHR43226">
    <property type="entry name" value="XAA-PRO AMINOPEPTIDASE 3"/>
    <property type="match status" value="1"/>
</dbReference>
<dbReference type="PANTHER" id="PTHR43226:SF8">
    <property type="entry name" value="XAA-PRO DIPEPTIDASE"/>
    <property type="match status" value="1"/>
</dbReference>
<dbReference type="Pfam" id="PF21216">
    <property type="entry name" value="PepQ_N"/>
    <property type="match status" value="1"/>
</dbReference>
<dbReference type="Pfam" id="PF00557">
    <property type="entry name" value="Peptidase_M24"/>
    <property type="match status" value="1"/>
</dbReference>
<dbReference type="SUPFAM" id="SSF55920">
    <property type="entry name" value="Creatinase/aminopeptidase"/>
    <property type="match status" value="1"/>
</dbReference>
<dbReference type="PROSITE" id="PS00491">
    <property type="entry name" value="PROLINE_PEPTIDASE"/>
    <property type="match status" value="1"/>
</dbReference>
<proteinExistence type="inferred from homology"/>
<evidence type="ECO:0000255" key="1">
    <source>
        <dbReference type="HAMAP-Rule" id="MF_01279"/>
    </source>
</evidence>